<gene>
    <name evidence="1" type="primary">acs</name>
    <name type="ordered locus">CKO_03816</name>
</gene>
<dbReference type="EC" id="6.2.1.1" evidence="1"/>
<dbReference type="EMBL" id="CP000822">
    <property type="protein sequence ID" value="ABV14892.1"/>
    <property type="molecule type" value="Genomic_DNA"/>
</dbReference>
<dbReference type="RefSeq" id="WP_012134587.1">
    <property type="nucleotide sequence ID" value="NC_009792.1"/>
</dbReference>
<dbReference type="SMR" id="A8AN29"/>
<dbReference type="STRING" id="290338.CKO_03816"/>
<dbReference type="GeneID" id="45137494"/>
<dbReference type="KEGG" id="cko:CKO_03816"/>
<dbReference type="HOGENOM" id="CLU_000022_3_6_6"/>
<dbReference type="OrthoDB" id="9803968at2"/>
<dbReference type="Proteomes" id="UP000008148">
    <property type="component" value="Chromosome"/>
</dbReference>
<dbReference type="GO" id="GO:0005829">
    <property type="term" value="C:cytosol"/>
    <property type="evidence" value="ECO:0007669"/>
    <property type="project" value="TreeGrafter"/>
</dbReference>
<dbReference type="GO" id="GO:0003987">
    <property type="term" value="F:acetate-CoA ligase activity"/>
    <property type="evidence" value="ECO:0007669"/>
    <property type="project" value="UniProtKB-UniRule"/>
</dbReference>
<dbReference type="GO" id="GO:0016208">
    <property type="term" value="F:AMP binding"/>
    <property type="evidence" value="ECO:0007669"/>
    <property type="project" value="InterPro"/>
</dbReference>
<dbReference type="GO" id="GO:0005524">
    <property type="term" value="F:ATP binding"/>
    <property type="evidence" value="ECO:0007669"/>
    <property type="project" value="UniProtKB-KW"/>
</dbReference>
<dbReference type="GO" id="GO:0046872">
    <property type="term" value="F:metal ion binding"/>
    <property type="evidence" value="ECO:0007669"/>
    <property type="project" value="UniProtKB-KW"/>
</dbReference>
<dbReference type="GO" id="GO:0019427">
    <property type="term" value="P:acetyl-CoA biosynthetic process from acetate"/>
    <property type="evidence" value="ECO:0007669"/>
    <property type="project" value="UniProtKB-UniRule"/>
</dbReference>
<dbReference type="GO" id="GO:0006935">
    <property type="term" value="P:chemotaxis"/>
    <property type="evidence" value="ECO:0007669"/>
    <property type="project" value="UniProtKB-UniRule"/>
</dbReference>
<dbReference type="CDD" id="cd05966">
    <property type="entry name" value="ACS"/>
    <property type="match status" value="1"/>
</dbReference>
<dbReference type="FunFam" id="3.30.300.30:FF:000004">
    <property type="entry name" value="Acetyl-coenzyme A synthetase"/>
    <property type="match status" value="1"/>
</dbReference>
<dbReference type="FunFam" id="3.40.50.12780:FF:000001">
    <property type="entry name" value="Acetyl-coenzyme A synthetase"/>
    <property type="match status" value="1"/>
</dbReference>
<dbReference type="Gene3D" id="3.30.300.30">
    <property type="match status" value="1"/>
</dbReference>
<dbReference type="Gene3D" id="3.40.50.12780">
    <property type="entry name" value="N-terminal domain of ligase-like"/>
    <property type="match status" value="1"/>
</dbReference>
<dbReference type="HAMAP" id="MF_01123">
    <property type="entry name" value="Ac_CoA_synth"/>
    <property type="match status" value="1"/>
</dbReference>
<dbReference type="InterPro" id="IPR011904">
    <property type="entry name" value="Ac_CoA_lig"/>
</dbReference>
<dbReference type="InterPro" id="IPR032387">
    <property type="entry name" value="ACAS_N"/>
</dbReference>
<dbReference type="InterPro" id="IPR025110">
    <property type="entry name" value="AMP-bd_C"/>
</dbReference>
<dbReference type="InterPro" id="IPR045851">
    <property type="entry name" value="AMP-bd_C_sf"/>
</dbReference>
<dbReference type="InterPro" id="IPR020845">
    <property type="entry name" value="AMP-binding_CS"/>
</dbReference>
<dbReference type="InterPro" id="IPR000873">
    <property type="entry name" value="AMP-dep_synth/lig_dom"/>
</dbReference>
<dbReference type="InterPro" id="IPR042099">
    <property type="entry name" value="ANL_N_sf"/>
</dbReference>
<dbReference type="NCBIfam" id="TIGR02188">
    <property type="entry name" value="Ac_CoA_lig_AcsA"/>
    <property type="match status" value="1"/>
</dbReference>
<dbReference type="NCBIfam" id="NF001208">
    <property type="entry name" value="PRK00174.1"/>
    <property type="match status" value="1"/>
</dbReference>
<dbReference type="PANTHER" id="PTHR24095">
    <property type="entry name" value="ACETYL-COENZYME A SYNTHETASE"/>
    <property type="match status" value="1"/>
</dbReference>
<dbReference type="PANTHER" id="PTHR24095:SF243">
    <property type="entry name" value="ACETYL-COENZYME A SYNTHETASE"/>
    <property type="match status" value="1"/>
</dbReference>
<dbReference type="Pfam" id="PF16177">
    <property type="entry name" value="ACAS_N"/>
    <property type="match status" value="1"/>
</dbReference>
<dbReference type="Pfam" id="PF00501">
    <property type="entry name" value="AMP-binding"/>
    <property type="match status" value="1"/>
</dbReference>
<dbReference type="Pfam" id="PF13193">
    <property type="entry name" value="AMP-binding_C"/>
    <property type="match status" value="1"/>
</dbReference>
<dbReference type="SUPFAM" id="SSF56801">
    <property type="entry name" value="Acetyl-CoA synthetase-like"/>
    <property type="match status" value="1"/>
</dbReference>
<dbReference type="PROSITE" id="PS00455">
    <property type="entry name" value="AMP_BINDING"/>
    <property type="match status" value="1"/>
</dbReference>
<accession>A8AN29</accession>
<protein>
    <recommendedName>
        <fullName evidence="1">Acetyl-coenzyme A synthetase</fullName>
        <shortName evidence="1">AcCoA synthetase</shortName>
        <shortName evidence="1">Acs</shortName>
        <ecNumber evidence="1">6.2.1.1</ecNumber>
    </recommendedName>
    <alternativeName>
        <fullName evidence="1">Acetate--CoA ligase</fullName>
    </alternativeName>
    <alternativeName>
        <fullName evidence="1">Acyl-activating enzyme</fullName>
    </alternativeName>
</protein>
<reference key="1">
    <citation type="submission" date="2007-08" db="EMBL/GenBank/DDBJ databases">
        <authorList>
            <consortium name="The Citrobacter koseri Genome Sequencing Project"/>
            <person name="McClelland M."/>
            <person name="Sanderson E.K."/>
            <person name="Porwollik S."/>
            <person name="Spieth J."/>
            <person name="Clifton W.S."/>
            <person name="Latreille P."/>
            <person name="Courtney L."/>
            <person name="Wang C."/>
            <person name="Pepin K."/>
            <person name="Bhonagiri V."/>
            <person name="Nash W."/>
            <person name="Johnson M."/>
            <person name="Thiruvilangam P."/>
            <person name="Wilson R."/>
        </authorList>
    </citation>
    <scope>NUCLEOTIDE SEQUENCE [LARGE SCALE GENOMIC DNA]</scope>
    <source>
        <strain>ATCC BAA-895 / CDC 4225-83 / SGSC4696</strain>
    </source>
</reference>
<evidence type="ECO:0000255" key="1">
    <source>
        <dbReference type="HAMAP-Rule" id="MF_01123"/>
    </source>
</evidence>
<name>ACSA_CITK8</name>
<sequence length="652" mass="72106">MSQIHKHAIPANIADRCLINPEQYEAKYQQSINEPDTFWGEQGKILDWITPYKKVKNTSFAPGNVSIKWYEDGTLNLAANCLDRHLQENGDRTAIIWEGDDATQSKHISYRELHRDVCRFANTLLELGIKKGDVVAIYMPMVPEAAVAMLACARIGAVHSVIFGGFSPEAVAGRIIDSSSRLVITADEGVRAGRGIPLKKNVDDALKNPNVNSVEHVVVLKRTGGKVDWHEGRDLWWSDVIEKSSADHQPEEMNAEDPLFILYTSGSTGKPKGVLHTTGGYLVYAATTFKYVFDYHPDDIYWCTADVGWVTGHSYLLYGPLACGATTLMFEGVPNWPTPARMAQVVDKHQVTILYTAPTAIRALMAEGDKAIEGTDRSSLRILGSVGEPINPEAWEWYWKKIGNEKCPVVDTWWQTETGGFMITPLPGATELKAGSATRPFFGVQPALVDNEGHPQEGATEGNLVITDSWPGQARTLFGDHERFEQTYFSTFKNMYFSGDGARRDEDGYYWITGRVDDVLNVSGHRLGTAEIESALVSHPKIAEAAVVGIPHNIKGQAIYAYVTLNHGEDPSPELYTEVRNWVRKEIGPLATPDVLHWTDSLPKTRSGKIMRRILRKIAAGDTSNLGDTSTLADPGVVEKLLEEKQAIAMPS</sequence>
<keyword id="KW-0007">Acetylation</keyword>
<keyword id="KW-0067">ATP-binding</keyword>
<keyword id="KW-0436">Ligase</keyword>
<keyword id="KW-0460">Magnesium</keyword>
<keyword id="KW-0479">Metal-binding</keyword>
<keyword id="KW-0547">Nucleotide-binding</keyword>
<keyword id="KW-1185">Reference proteome</keyword>
<comment type="function">
    <text evidence="1">Catalyzes the conversion of acetate into acetyl-CoA (AcCoA), an essential intermediate at the junction of anabolic and catabolic pathways. Acs undergoes a two-step reaction. In the first half reaction, Acs combines acetate with ATP to form acetyl-adenylate (AcAMP) intermediate. In the second half reaction, it can then transfer the acetyl group from AcAMP to the sulfhydryl group of CoA, forming the product AcCoA.</text>
</comment>
<comment type="function">
    <text evidence="1">Enables the cell to use acetate during aerobic growth to generate energy via the TCA cycle, and biosynthetic compounds via the glyoxylate shunt. Acetylates CheY, the response regulator involved in flagellar movement and chemotaxis.</text>
</comment>
<comment type="catalytic activity">
    <reaction evidence="1">
        <text>acetate + ATP + CoA = acetyl-CoA + AMP + diphosphate</text>
        <dbReference type="Rhea" id="RHEA:23176"/>
        <dbReference type="ChEBI" id="CHEBI:30089"/>
        <dbReference type="ChEBI" id="CHEBI:30616"/>
        <dbReference type="ChEBI" id="CHEBI:33019"/>
        <dbReference type="ChEBI" id="CHEBI:57287"/>
        <dbReference type="ChEBI" id="CHEBI:57288"/>
        <dbReference type="ChEBI" id="CHEBI:456215"/>
        <dbReference type="EC" id="6.2.1.1"/>
    </reaction>
</comment>
<comment type="cofactor">
    <cofactor evidence="1">
        <name>Mg(2+)</name>
        <dbReference type="ChEBI" id="CHEBI:18420"/>
    </cofactor>
</comment>
<comment type="PTM">
    <text evidence="1">Acetylated. Deacetylation by the SIR2-homolog deacetylase activates the enzyme.</text>
</comment>
<comment type="similarity">
    <text evidence="1">Belongs to the ATP-dependent AMP-binding enzyme family.</text>
</comment>
<proteinExistence type="inferred from homology"/>
<feature type="chain" id="PRO_1000065289" description="Acetyl-coenzyme A synthetase">
    <location>
        <begin position="1"/>
        <end position="652"/>
    </location>
</feature>
<feature type="binding site" evidence="1">
    <location>
        <begin position="191"/>
        <end position="194"/>
    </location>
    <ligand>
        <name>CoA</name>
        <dbReference type="ChEBI" id="CHEBI:57287"/>
    </ligand>
</feature>
<feature type="binding site" evidence="1">
    <location>
        <position position="311"/>
    </location>
    <ligand>
        <name>CoA</name>
        <dbReference type="ChEBI" id="CHEBI:57287"/>
    </ligand>
</feature>
<feature type="binding site" evidence="1">
    <location>
        <position position="335"/>
    </location>
    <ligand>
        <name>CoA</name>
        <dbReference type="ChEBI" id="CHEBI:57287"/>
    </ligand>
</feature>
<feature type="binding site" evidence="1">
    <location>
        <begin position="387"/>
        <end position="389"/>
    </location>
    <ligand>
        <name>ATP</name>
        <dbReference type="ChEBI" id="CHEBI:30616"/>
    </ligand>
</feature>
<feature type="binding site" evidence="1">
    <location>
        <begin position="411"/>
        <end position="416"/>
    </location>
    <ligand>
        <name>ATP</name>
        <dbReference type="ChEBI" id="CHEBI:30616"/>
    </ligand>
</feature>
<feature type="binding site" evidence="1">
    <location>
        <position position="500"/>
    </location>
    <ligand>
        <name>ATP</name>
        <dbReference type="ChEBI" id="CHEBI:30616"/>
    </ligand>
</feature>
<feature type="binding site" evidence="1">
    <location>
        <position position="515"/>
    </location>
    <ligand>
        <name>ATP</name>
        <dbReference type="ChEBI" id="CHEBI:30616"/>
    </ligand>
</feature>
<feature type="binding site" evidence="1">
    <location>
        <position position="523"/>
    </location>
    <ligand>
        <name>CoA</name>
        <dbReference type="ChEBI" id="CHEBI:57287"/>
    </ligand>
</feature>
<feature type="binding site" evidence="1">
    <location>
        <position position="526"/>
    </location>
    <ligand>
        <name>ATP</name>
        <dbReference type="ChEBI" id="CHEBI:30616"/>
    </ligand>
</feature>
<feature type="binding site" evidence="1">
    <location>
        <position position="537"/>
    </location>
    <ligand>
        <name>Mg(2+)</name>
        <dbReference type="ChEBI" id="CHEBI:18420"/>
    </ligand>
</feature>
<feature type="binding site" evidence="1">
    <location>
        <position position="539"/>
    </location>
    <ligand>
        <name>Mg(2+)</name>
        <dbReference type="ChEBI" id="CHEBI:18420"/>
    </ligand>
</feature>
<feature type="binding site" evidence="1">
    <location>
        <position position="542"/>
    </location>
    <ligand>
        <name>Mg(2+)</name>
        <dbReference type="ChEBI" id="CHEBI:18420"/>
    </ligand>
</feature>
<feature type="binding site" evidence="1">
    <location>
        <position position="584"/>
    </location>
    <ligand>
        <name>CoA</name>
        <dbReference type="ChEBI" id="CHEBI:57287"/>
    </ligand>
</feature>
<feature type="modified residue" description="N6-acetyllysine" evidence="1">
    <location>
        <position position="609"/>
    </location>
</feature>
<organism>
    <name type="scientific">Citrobacter koseri (strain ATCC BAA-895 / CDC 4225-83 / SGSC4696)</name>
    <dbReference type="NCBI Taxonomy" id="290338"/>
    <lineage>
        <taxon>Bacteria</taxon>
        <taxon>Pseudomonadati</taxon>
        <taxon>Pseudomonadota</taxon>
        <taxon>Gammaproteobacteria</taxon>
        <taxon>Enterobacterales</taxon>
        <taxon>Enterobacteriaceae</taxon>
        <taxon>Citrobacter</taxon>
    </lineage>
</organism>